<accession>B3QCX5</accession>
<organism>
    <name type="scientific">Rhodopseudomonas palustris (strain TIE-1)</name>
    <dbReference type="NCBI Taxonomy" id="395960"/>
    <lineage>
        <taxon>Bacteria</taxon>
        <taxon>Pseudomonadati</taxon>
        <taxon>Pseudomonadota</taxon>
        <taxon>Alphaproteobacteria</taxon>
        <taxon>Hyphomicrobiales</taxon>
        <taxon>Nitrobacteraceae</taxon>
        <taxon>Rhodopseudomonas</taxon>
    </lineage>
</organism>
<reference key="1">
    <citation type="submission" date="2008-05" db="EMBL/GenBank/DDBJ databases">
        <title>Complete sequence of Rhodopseudomonas palustris TIE-1.</title>
        <authorList>
            <consortium name="US DOE Joint Genome Institute"/>
            <person name="Lucas S."/>
            <person name="Copeland A."/>
            <person name="Lapidus A."/>
            <person name="Glavina del Rio T."/>
            <person name="Dalin E."/>
            <person name="Tice H."/>
            <person name="Pitluck S."/>
            <person name="Chain P."/>
            <person name="Malfatti S."/>
            <person name="Shin M."/>
            <person name="Vergez L."/>
            <person name="Lang D."/>
            <person name="Schmutz J."/>
            <person name="Larimer F."/>
            <person name="Land M."/>
            <person name="Hauser L."/>
            <person name="Kyrpides N."/>
            <person name="Mikhailova N."/>
            <person name="Emerson D."/>
            <person name="Newman D.K."/>
            <person name="Roden E."/>
            <person name="Richardson P."/>
        </authorList>
    </citation>
    <scope>NUCLEOTIDE SEQUENCE [LARGE SCALE GENOMIC DNA]</scope>
    <source>
        <strain>TIE-1</strain>
    </source>
</reference>
<gene>
    <name evidence="1" type="primary">leuA</name>
    <name type="ordered locus">Rpal_2259</name>
</gene>
<comment type="function">
    <text evidence="1">Catalyzes the condensation of the acetyl group of acetyl-CoA with 3-methyl-2-oxobutanoate (2-ketoisovalerate) to form 3-carboxy-3-hydroxy-4-methylpentanoate (2-isopropylmalate).</text>
</comment>
<comment type="catalytic activity">
    <reaction evidence="1">
        <text>3-methyl-2-oxobutanoate + acetyl-CoA + H2O = (2S)-2-isopropylmalate + CoA + H(+)</text>
        <dbReference type="Rhea" id="RHEA:21524"/>
        <dbReference type="ChEBI" id="CHEBI:1178"/>
        <dbReference type="ChEBI" id="CHEBI:11851"/>
        <dbReference type="ChEBI" id="CHEBI:15377"/>
        <dbReference type="ChEBI" id="CHEBI:15378"/>
        <dbReference type="ChEBI" id="CHEBI:57287"/>
        <dbReference type="ChEBI" id="CHEBI:57288"/>
        <dbReference type="EC" id="2.3.3.13"/>
    </reaction>
</comment>
<comment type="cofactor">
    <cofactor evidence="1">
        <name>Mn(2+)</name>
        <dbReference type="ChEBI" id="CHEBI:29035"/>
    </cofactor>
</comment>
<comment type="pathway">
    <text evidence="1">Amino-acid biosynthesis; L-leucine biosynthesis; L-leucine from 3-methyl-2-oxobutanoate: step 1/4.</text>
</comment>
<comment type="subunit">
    <text evidence="1">Homodimer.</text>
</comment>
<comment type="subcellular location">
    <subcellularLocation>
        <location evidence="1">Cytoplasm</location>
    </subcellularLocation>
</comment>
<comment type="similarity">
    <text evidence="1">Belongs to the alpha-IPM synthase/homocitrate synthase family. LeuA type 1 subfamily.</text>
</comment>
<protein>
    <recommendedName>
        <fullName evidence="1">2-isopropylmalate synthase</fullName>
        <ecNumber evidence="1">2.3.3.13</ecNumber>
    </recommendedName>
    <alternativeName>
        <fullName evidence="1">Alpha-IPM synthase</fullName>
    </alternativeName>
    <alternativeName>
        <fullName evidence="1">Alpha-isopropylmalate synthase</fullName>
    </alternativeName>
</protein>
<name>LEU1_RHOPT</name>
<proteinExistence type="inferred from homology"/>
<evidence type="ECO:0000255" key="1">
    <source>
        <dbReference type="HAMAP-Rule" id="MF_01025"/>
    </source>
</evidence>
<sequence>MTTTTQSEQDRVIIFDTTLRDGEQCPGATMTFEEKLNVARMLDDMGVDVIEAGYPFASDGDFEAVHEIAKRSKNSVICGLSRAAHKDIDRCAEAIKPAERGRIHTFLSTSPVHMKYKLQMEAAQVYEMVISSVTRARNHTDDVEWSAEDATRTEFDFLCRCIEAAIKAGATTINLPDTVGYAVPEEYRELFRKVRETVPNSDKARFSVHCHNDLGMAVANSMAGVAGGARQIECTINGIGERAGNAALEEVVMAMRVRQDKLPYWNRIETTMLTHASKTVSAATSFPVQYNKAIVGRNAFAHESGIHQDGMIKNAQTYEIMTPETVGVKGTSLVMGKHSGRAGLIHKMEELGYKLSRNQIEDVFVRFKALADRKKDVYDEDIEALVDEQLLHGQDQIKLMSLTVIAGTHGPQRATMKLDVDGQIRIEEAEGNGPVDAVFNCIKALVPHDAKLELYQVHAVTEGTDAQAEVSVRLSHEGRSMTARAADPDTLVASAKAYLGALNKIVAKRQRSVREDAPTVAVAG</sequence>
<keyword id="KW-0028">Amino-acid biosynthesis</keyword>
<keyword id="KW-0100">Branched-chain amino acid biosynthesis</keyword>
<keyword id="KW-0963">Cytoplasm</keyword>
<keyword id="KW-0432">Leucine biosynthesis</keyword>
<keyword id="KW-0464">Manganese</keyword>
<keyword id="KW-0479">Metal-binding</keyword>
<keyword id="KW-0808">Transferase</keyword>
<dbReference type="EC" id="2.3.3.13" evidence="1"/>
<dbReference type="EMBL" id="CP001096">
    <property type="protein sequence ID" value="ACF00780.1"/>
    <property type="molecule type" value="Genomic_DNA"/>
</dbReference>
<dbReference type="RefSeq" id="WP_012495562.1">
    <property type="nucleotide sequence ID" value="NC_011004.1"/>
</dbReference>
<dbReference type="SMR" id="B3QCX5"/>
<dbReference type="KEGG" id="rpt:Rpal_2259"/>
<dbReference type="HOGENOM" id="CLU_022158_0_1_5"/>
<dbReference type="OrthoDB" id="9803573at2"/>
<dbReference type="UniPathway" id="UPA00048">
    <property type="reaction ID" value="UER00070"/>
</dbReference>
<dbReference type="Proteomes" id="UP000001725">
    <property type="component" value="Chromosome"/>
</dbReference>
<dbReference type="GO" id="GO:0005829">
    <property type="term" value="C:cytosol"/>
    <property type="evidence" value="ECO:0007669"/>
    <property type="project" value="TreeGrafter"/>
</dbReference>
<dbReference type="GO" id="GO:0003852">
    <property type="term" value="F:2-isopropylmalate synthase activity"/>
    <property type="evidence" value="ECO:0007669"/>
    <property type="project" value="UniProtKB-UniRule"/>
</dbReference>
<dbReference type="GO" id="GO:0003985">
    <property type="term" value="F:acetyl-CoA C-acetyltransferase activity"/>
    <property type="evidence" value="ECO:0007669"/>
    <property type="project" value="UniProtKB-UniRule"/>
</dbReference>
<dbReference type="GO" id="GO:0030145">
    <property type="term" value="F:manganese ion binding"/>
    <property type="evidence" value="ECO:0007669"/>
    <property type="project" value="UniProtKB-UniRule"/>
</dbReference>
<dbReference type="GO" id="GO:0009098">
    <property type="term" value="P:L-leucine biosynthetic process"/>
    <property type="evidence" value="ECO:0007669"/>
    <property type="project" value="UniProtKB-UniRule"/>
</dbReference>
<dbReference type="CDD" id="cd07940">
    <property type="entry name" value="DRE_TIM_IPMS"/>
    <property type="match status" value="1"/>
</dbReference>
<dbReference type="FunFam" id="1.10.238.260:FF:000001">
    <property type="entry name" value="2-isopropylmalate synthase"/>
    <property type="match status" value="1"/>
</dbReference>
<dbReference type="FunFam" id="3.20.20.70:FF:000010">
    <property type="entry name" value="2-isopropylmalate synthase"/>
    <property type="match status" value="1"/>
</dbReference>
<dbReference type="FunFam" id="3.30.160.270:FF:000003">
    <property type="entry name" value="2-isopropylmalate synthase"/>
    <property type="match status" value="1"/>
</dbReference>
<dbReference type="Gene3D" id="1.10.238.260">
    <property type="match status" value="1"/>
</dbReference>
<dbReference type="Gene3D" id="3.30.160.270">
    <property type="match status" value="1"/>
</dbReference>
<dbReference type="Gene3D" id="3.20.20.70">
    <property type="entry name" value="Aldolase class I"/>
    <property type="match status" value="1"/>
</dbReference>
<dbReference type="HAMAP" id="MF_01025">
    <property type="entry name" value="LeuA_type1"/>
    <property type="match status" value="1"/>
</dbReference>
<dbReference type="InterPro" id="IPR050073">
    <property type="entry name" value="2-IPM_HCS-like"/>
</dbReference>
<dbReference type="InterPro" id="IPR013709">
    <property type="entry name" value="2-isopropylmalate_synth_dimer"/>
</dbReference>
<dbReference type="InterPro" id="IPR002034">
    <property type="entry name" value="AIPM/Hcit_synth_CS"/>
</dbReference>
<dbReference type="InterPro" id="IPR013785">
    <property type="entry name" value="Aldolase_TIM"/>
</dbReference>
<dbReference type="InterPro" id="IPR054691">
    <property type="entry name" value="LeuA/HCS_post-cat"/>
</dbReference>
<dbReference type="InterPro" id="IPR036230">
    <property type="entry name" value="LeuA_allosteric_dom_sf"/>
</dbReference>
<dbReference type="InterPro" id="IPR005671">
    <property type="entry name" value="LeuA_bact_synth"/>
</dbReference>
<dbReference type="InterPro" id="IPR000891">
    <property type="entry name" value="PYR_CT"/>
</dbReference>
<dbReference type="NCBIfam" id="TIGR00973">
    <property type="entry name" value="leuA_bact"/>
    <property type="match status" value="1"/>
</dbReference>
<dbReference type="NCBIfam" id="NF002086">
    <property type="entry name" value="PRK00915.1-3"/>
    <property type="match status" value="1"/>
</dbReference>
<dbReference type="NCBIfam" id="NF002087">
    <property type="entry name" value="PRK00915.1-4"/>
    <property type="match status" value="1"/>
</dbReference>
<dbReference type="PANTHER" id="PTHR10277:SF9">
    <property type="entry name" value="2-ISOPROPYLMALATE SYNTHASE 1, CHLOROPLASTIC-RELATED"/>
    <property type="match status" value="1"/>
</dbReference>
<dbReference type="PANTHER" id="PTHR10277">
    <property type="entry name" value="HOMOCITRATE SYNTHASE-RELATED"/>
    <property type="match status" value="1"/>
</dbReference>
<dbReference type="Pfam" id="PF22617">
    <property type="entry name" value="HCS_D2"/>
    <property type="match status" value="1"/>
</dbReference>
<dbReference type="Pfam" id="PF00682">
    <property type="entry name" value="HMGL-like"/>
    <property type="match status" value="1"/>
</dbReference>
<dbReference type="Pfam" id="PF08502">
    <property type="entry name" value="LeuA_dimer"/>
    <property type="match status" value="1"/>
</dbReference>
<dbReference type="SMART" id="SM00917">
    <property type="entry name" value="LeuA_dimer"/>
    <property type="match status" value="1"/>
</dbReference>
<dbReference type="SUPFAM" id="SSF110921">
    <property type="entry name" value="2-isopropylmalate synthase LeuA, allosteric (dimerisation) domain"/>
    <property type="match status" value="1"/>
</dbReference>
<dbReference type="SUPFAM" id="SSF51569">
    <property type="entry name" value="Aldolase"/>
    <property type="match status" value="1"/>
</dbReference>
<dbReference type="PROSITE" id="PS00815">
    <property type="entry name" value="AIPM_HOMOCIT_SYNTH_1"/>
    <property type="match status" value="1"/>
</dbReference>
<dbReference type="PROSITE" id="PS00816">
    <property type="entry name" value="AIPM_HOMOCIT_SYNTH_2"/>
    <property type="match status" value="1"/>
</dbReference>
<dbReference type="PROSITE" id="PS50991">
    <property type="entry name" value="PYR_CT"/>
    <property type="match status" value="1"/>
</dbReference>
<feature type="chain" id="PRO_1000149261" description="2-isopropylmalate synthase">
    <location>
        <begin position="1"/>
        <end position="524"/>
    </location>
</feature>
<feature type="domain" description="Pyruvate carboxyltransferase" evidence="1">
    <location>
        <begin position="12"/>
        <end position="274"/>
    </location>
</feature>
<feature type="region of interest" description="Regulatory domain" evidence="1">
    <location>
        <begin position="398"/>
        <end position="524"/>
    </location>
</feature>
<feature type="binding site" evidence="1">
    <location>
        <position position="21"/>
    </location>
    <ligand>
        <name>Mn(2+)</name>
        <dbReference type="ChEBI" id="CHEBI:29035"/>
    </ligand>
</feature>
<feature type="binding site" evidence="1">
    <location>
        <position position="209"/>
    </location>
    <ligand>
        <name>Mn(2+)</name>
        <dbReference type="ChEBI" id="CHEBI:29035"/>
    </ligand>
</feature>
<feature type="binding site" evidence="1">
    <location>
        <position position="211"/>
    </location>
    <ligand>
        <name>Mn(2+)</name>
        <dbReference type="ChEBI" id="CHEBI:29035"/>
    </ligand>
</feature>
<feature type="binding site" evidence="1">
    <location>
        <position position="245"/>
    </location>
    <ligand>
        <name>Mn(2+)</name>
        <dbReference type="ChEBI" id="CHEBI:29035"/>
    </ligand>
</feature>